<sequence length="2909" mass="318393">MVFRATREPFRLPLVAAFIALFLLKGVTCQLQLGTSTLQKNMWTTVKFDEPMIDPVVFVSPPEAPTNSFALVLIGGVTTSGFRARVYFPSCEYSPSGGTLYAVRWLAVEATSAGYYDSSNRQTIDWTAHAVTLASSGTIPAGYVWSQSFSAWEDRPGTPGVLIGVQNHREMISAMYWSSEYLNPLVINSNSGGTLTFSFLRQISHRIGFTLKVGIFQYDARRGAVINGVNLVAQRYDLKVNEVLPVADVVAGGTTPATFAVQWVTPTEAPLALVVKPKLLPDGSYSESLVAVEDCRNGATYEPHAFDVTHAFTGNPASTAHRINGGPNCFRPSASVPTWLTEPCKLACESLWTANSDDYWNCDDVNACFETDFRSAETLMALPQIDESIADVLVTSCNFATRTADLIKQYEYAVNLKVDDIAIGTMWSTSSHCGGDKMEVEIVGAFYEKLGVSILTGSTCEVQDVSREVEALCKAEGGIGCSISAAQIYELIMNYPGVCFALEDAELQIFFNCTFASTSPFDCELYESKGFDQENGDCMCPNALAACTREEATFKSGWLQNLNKSYQYMLHGQIRYVAKSSVFQAFYEAPETSSAGDNTLCARMNTIVVCKNPTPVSAVVGNRGPNCYVIEHGSQYCHLPCLTAWDAFLAAKDLPQQSDYQAEFERFWLSFDFPAIPPHTSQSLLEQLQRCRFATRPATAPLQQYEDEIDVQLPDYGAVIIPLGCDKLHHREVVQALVGSASSIMLGVHEPGCRYEDATETVQRECKAAVSARKTTCEIDSSLFTSKDILCNTSTIKLIIRGTCIPGPYLPTNYTCALYPTTGVVSRDGRSCTCPNSAYPCTYEEGQLTASRWKNEVNTGATVSLANNVVWTAPPGTSEYTYTHTDAYDYVCSTDEHHFVLCKDLTPSALPLTEREPHCLNSFSVKPDASTVDDRDCQDQCASLFATRCRQSFYKWLCVAQGLPECYIPNTDSFTCQIDTNPSAYNYSYGSCGCSGAYPPCSRNEANATRLDWITAFRALSHKKGVVVARGKQALWTENPDRWRYENGMLQGGGCLNNSWFVGVFCGAHLSVTPPARGDVLPLCSSAAKVENPDTPYPACRVLCAQVLNECKKVFSTTEGAAAYASVFDCFKARGKGTTLDNCTYELGPENRATGVAELHTGWTVASASWSRVLFDVEFADPPVVFLGIPKDTQPFYTPSVRLVTKTSFEVKLYRNNCGLDDTRSSSAPVSWMAIPEGAYLTDFVENPVRVMKLPMTTRTPTVLTFSLSGLKEPEEMVALAQVQDVTPTSVSTDRVAVVISNLKTNSLELSLVVDESVNFSTVAVGILISGKQNPDLAAGLSPLLNRYHLQTFRIPAAAYSATSILGEGLYLSGGIMPHVFAAAIQTRSMTKELNESDRVVISRRATTTPFTWSALLWKKTCEAKHMFEAVENPSDLIIAGIYVEARKDEPSAILGNRHDLCLSFIGQSFESGVVATCMGACRSALPASVQLHCQDECALNIFAPSVHTKCMTDCESLLVAQYEECAGQCTATGTASCQRKCKQFLGNKCDSTASSDVAACLEFVTPPSVFEQCTLLVEYSVSEGGPSDGFEIEEETTPSQTYENCIIVDMRDERFTAFTGWDSRVASCKCPNDFRACTSETVNTQNHWRTELLASAGLCKEQPDGRFNAVTQQLWSTTGDLCALAADEQQPPISWASNMLPAYVDQDIVLDNSTIRSGDYQCREIWHYVVCPAAATSTTTQEPPVPPFTATLNTAIVGEWGEWSACTGTCFSQWWTPKRTRTRLVLAELSHSQIPSVSETATCLDLPPCGTVCWEREWTEWSECKLFTIVMGQGLEYFRQQIKPVFDFVEEACGLDEHERYERCGEEQDNGETPATSTLQTDSLLETRSLTVSHGTAARALPRVSMDPALERPSFASLHGTRSHVPASTDAKIIERRKGIMSRRRSVPPSGYLEETAEQVAHGGESEQSGKASQNGSRRHRASRKQKRDLESIYSDASVRGSGESTLHGTGTNAYRDQIEWTSKSSSRSAIRDSGARGAEAGTSLLQKARRARRGAGRFRKSRSQARNQTPDKSCSVVSEWSGCDSPCLPHKGSTPRRYRLAVPGQNEANYCTVPLSGTEHLCTDLPQCAHPNFDCAKVTASRLTDEDIAACKAVCVEVVKTCETMMSAVFSLYTSLEQCALVQFQEYEQFPGQCHIPEEYTSTRRPTKCFPSRTRRRVASGELPFIFQVSTASGTSPSATSDAASSVAESFVSTGTASAPSSRVMNALAFEASASQTSIDSCECYDPADEPCTAQEARDSLFDSLYLFLTHPLCAESPAAEGALFTMSEPNQTADAASYFALRGLGRMHCPVPMYKSSTEVKGVLTPKRVTFSEFKTKEDLNEFCHKGLSNWRQNVPPEIIGSASFPNCMLVTPREGAEPQDCALLCSETMSSCSAASLSFVELSQCVQDKLTESDFYSKCSAPEVLAPGEGIILCKKKVSTCDYTEWSEWSTCTATCFNWDEGVIPLRVRSRDFASSSADSRVLCRLESQNDAIQTEKCDWMPVCPEAEGEEEDDATGGVEPRGEPIVPPWSPERPTDENNQAMGSEDIVSGTVECYVTNMGTIMTSYYRGYNQEYHGCNCPGGRRPCTRAEAVASLDLWTKDSGGLCDQDMATMISAAEGEAFFCATGSFGKIDTSLSESSCASSEYQYVLCEGHPYEGIANLTTWVICLLLGVGGGICFVLSCVQYSSDIQKLLGLAGSYPVLVQNVTELQERESHKLRRQGNISATSERSDAHALSLSDSGWDVDGNQSAGSAFPEEEPWQFEDRDEEPLLSTRKYSRNLGSAGIPEPSEIGQTSPTQQRVPRASLAAQRSTCQLSSRLGQANSPEQSLERRSLKLRDSHADVELQRTLRKEMKGNQVWDKTV</sequence>
<name>MIC15_TOXGO</name>
<organism evidence="10">
    <name type="scientific">Toxoplasma gondii</name>
    <dbReference type="NCBI Taxonomy" id="5811"/>
    <lineage>
        <taxon>Eukaryota</taxon>
        <taxon>Sar</taxon>
        <taxon>Alveolata</taxon>
        <taxon>Apicomplexa</taxon>
        <taxon>Conoidasida</taxon>
        <taxon>Coccidia</taxon>
        <taxon>Eucoccidiorida</taxon>
        <taxon>Eimeriorina</taxon>
        <taxon>Sarcocystidae</taxon>
        <taxon>Toxoplasma</taxon>
    </lineage>
</organism>
<feature type="signal peptide" evidence="1">
    <location>
        <begin position="1"/>
        <end position="29"/>
    </location>
</feature>
<feature type="chain" id="PRO_5036285891" description="Micronemal protein 15" evidence="1">
    <location>
        <begin position="30"/>
        <end position="2909"/>
    </location>
</feature>
<feature type="transmembrane region" description="Helical" evidence="1">
    <location>
        <begin position="2709"/>
        <end position="2729"/>
    </location>
</feature>
<feature type="domain" description="TSP type-1 1" evidence="2">
    <location>
        <begin position="1755"/>
        <end position="1811"/>
    </location>
</feature>
<feature type="domain" description="TSP type-1 2" evidence="2">
    <location>
        <begin position="2484"/>
        <end position="2549"/>
    </location>
</feature>
<feature type="region of interest" description="Disordered" evidence="4">
    <location>
        <begin position="1937"/>
        <end position="2073"/>
    </location>
</feature>
<feature type="region of interest" description="Disordered" evidence="4">
    <location>
        <begin position="2552"/>
        <end position="2587"/>
    </location>
</feature>
<feature type="region of interest" description="Disordered" evidence="4">
    <location>
        <begin position="2759"/>
        <end position="2846"/>
    </location>
</feature>
<feature type="compositionally biased region" description="Polar residues" evidence="4">
    <location>
        <begin position="1967"/>
        <end position="1977"/>
    </location>
</feature>
<feature type="compositionally biased region" description="Basic residues" evidence="4">
    <location>
        <begin position="1978"/>
        <end position="1988"/>
    </location>
</feature>
<feature type="compositionally biased region" description="Polar residues" evidence="4">
    <location>
        <begin position="2004"/>
        <end position="2016"/>
    </location>
</feature>
<feature type="compositionally biased region" description="Basic residues" evidence="4">
    <location>
        <begin position="2049"/>
        <end position="2065"/>
    </location>
</feature>
<feature type="compositionally biased region" description="Acidic residues" evidence="4">
    <location>
        <begin position="2801"/>
        <end position="2815"/>
    </location>
</feature>
<feature type="compositionally biased region" description="Polar residues" evidence="4">
    <location>
        <begin position="2837"/>
        <end position="2846"/>
    </location>
</feature>
<feature type="glycosylation site" description="N-linked (GlcNAc...) asparagine" evidence="3">
    <location>
        <position position="512"/>
    </location>
</feature>
<feature type="glycosylation site" description="N-linked (GlcNAc...) asparagine" evidence="3">
    <location>
        <position position="563"/>
    </location>
</feature>
<feature type="glycosylation site" description="N-linked (GlcNAc...) asparagine" evidence="3">
    <location>
        <position position="792"/>
    </location>
</feature>
<feature type="glycosylation site" description="N-linked (GlcNAc...) asparagine" evidence="3">
    <location>
        <position position="813"/>
    </location>
</feature>
<feature type="glycosylation site" description="N-linked (GlcNAc...) asparagine" evidence="3">
    <location>
        <position position="986"/>
    </location>
</feature>
<feature type="glycosylation site" description="N-linked (GlcNAc...) asparagine" evidence="3">
    <location>
        <position position="1007"/>
    </location>
</feature>
<feature type="glycosylation site" description="N-linked (GlcNAc...) asparagine" evidence="3">
    <location>
        <position position="1057"/>
    </location>
</feature>
<feature type="glycosylation site" description="N-linked (GlcNAc...) asparagine" evidence="3">
    <location>
        <position position="1142"/>
    </location>
</feature>
<feature type="glycosylation site" description="N-linked (GlcNAc...) asparagine" evidence="3">
    <location>
        <position position="1319"/>
    </location>
</feature>
<feature type="glycosylation site" description="N-linked (GlcNAc...) asparagine" evidence="3">
    <location>
        <position position="1395"/>
    </location>
</feature>
<feature type="glycosylation site" description="N-linked (GlcNAc...) asparagine" evidence="3">
    <location>
        <position position="1713"/>
    </location>
</feature>
<feature type="glycosylation site" description="N-linked (GlcNAc...) asparagine" evidence="3">
    <location>
        <position position="1976"/>
    </location>
</feature>
<feature type="glycosylation site" description="N-linked (GlcNAc...) asparagine" evidence="3">
    <location>
        <position position="2333"/>
    </location>
</feature>
<feature type="glycosylation site" description="N-linked (GlcNAc...) asparagine" evidence="3">
    <location>
        <position position="2706"/>
    </location>
</feature>
<feature type="glycosylation site" description="N-linked (GlcNAc...) asparagine" evidence="3">
    <location>
        <position position="2751"/>
    </location>
</feature>
<feature type="glycosylation site" description="N-linked (GlcNAc...) asparagine" evidence="3">
    <location>
        <position position="2768"/>
    </location>
</feature>
<feature type="glycosylation site" description="N-linked (GlcNAc...) asparagine" evidence="3">
    <location>
        <position position="2793"/>
    </location>
</feature>
<feature type="disulfide bond" evidence="2">
    <location>
        <begin position="2485"/>
        <end position="2528"/>
    </location>
</feature>
<feature type="disulfide bond" evidence="2">
    <location>
        <begin position="2496"/>
        <end position="2500"/>
    </location>
</feature>
<feature type="disulfide bond" evidence="2">
    <location>
        <begin position="2542"/>
        <end position="2548"/>
    </location>
</feature>
<proteinExistence type="evidence at protein level"/>
<dbReference type="EMBL" id="DQ459408">
    <property type="protein sequence ID" value="ABE73145.2"/>
    <property type="molecule type" value="mRNA"/>
</dbReference>
<dbReference type="EMBL" id="JAAUHK010000197">
    <property type="protein sequence ID" value="KAF4638522.1"/>
    <property type="molecule type" value="Genomic_DNA"/>
</dbReference>
<dbReference type="VEuPathDB" id="ToxoDB:TGARI_247195A"/>
<dbReference type="VEuPathDB" id="ToxoDB:TGARI_247195B"/>
<dbReference type="VEuPathDB" id="ToxoDB:TGARI_247195C"/>
<dbReference type="VEuPathDB" id="ToxoDB:TGCAST_247195A"/>
<dbReference type="VEuPathDB" id="ToxoDB:TGCAST_247195B"/>
<dbReference type="VEuPathDB" id="ToxoDB:TGCOUG_247195"/>
<dbReference type="VEuPathDB" id="ToxoDB:TGDOM2_247195"/>
<dbReference type="VEuPathDB" id="ToxoDB:TGFOU_247195A"/>
<dbReference type="VEuPathDB" id="ToxoDB:TGFOU_247195B"/>
<dbReference type="VEuPathDB" id="ToxoDB:TGGT1_247195"/>
<dbReference type="VEuPathDB" id="ToxoDB:TGMAS_218340"/>
<dbReference type="VEuPathDB" id="ToxoDB:TGMAS_247195A"/>
<dbReference type="VEuPathDB" id="ToxoDB:TGMAS_247195B"/>
<dbReference type="VEuPathDB" id="ToxoDB:TGME49_247195"/>
<dbReference type="VEuPathDB" id="ToxoDB:TGP89_218340"/>
<dbReference type="VEuPathDB" id="ToxoDB:TGP89_247195B"/>
<dbReference type="VEuPathDB" id="ToxoDB:TGPRC2_247195A"/>
<dbReference type="VEuPathDB" id="ToxoDB:TGPRC2_247195B"/>
<dbReference type="VEuPathDB" id="ToxoDB:TGRH88_061300"/>
<dbReference type="VEuPathDB" id="ToxoDB:TGRUB_247195"/>
<dbReference type="VEuPathDB" id="ToxoDB:TGVAND_247195"/>
<dbReference type="VEuPathDB" id="ToxoDB:TGVEG_247195"/>
<dbReference type="HOGENOM" id="CLU_241596_0_0_1"/>
<dbReference type="Proteomes" id="UP000557509">
    <property type="component" value="Unassembled WGS sequence"/>
</dbReference>
<dbReference type="GO" id="GO:0016020">
    <property type="term" value="C:membrane"/>
    <property type="evidence" value="ECO:0007669"/>
    <property type="project" value="UniProtKB-SubCell"/>
</dbReference>
<dbReference type="GO" id="GO:0006887">
    <property type="term" value="P:exocytosis"/>
    <property type="evidence" value="ECO:0007669"/>
    <property type="project" value="UniProtKB-KW"/>
</dbReference>
<dbReference type="Gene3D" id="2.60.40.2080">
    <property type="match status" value="1"/>
</dbReference>
<dbReference type="InterPro" id="IPR037221">
    <property type="entry name" value="H-type_lectin_dom_sf"/>
</dbReference>
<dbReference type="InterPro" id="IPR000884">
    <property type="entry name" value="TSP1_rpt"/>
</dbReference>
<dbReference type="SMART" id="SM00209">
    <property type="entry name" value="TSP1"/>
    <property type="match status" value="3"/>
</dbReference>
<dbReference type="SUPFAM" id="SSF141086">
    <property type="entry name" value="Agglutinin HPA-like"/>
    <property type="match status" value="1"/>
</dbReference>
<dbReference type="PROSITE" id="PS50092">
    <property type="entry name" value="TSP1"/>
    <property type="match status" value="2"/>
</dbReference>
<accession>Q1PA41</accession>
<protein>
    <recommendedName>
        <fullName evidence="9">Micronemal protein 15</fullName>
    </recommendedName>
    <alternativeName>
        <fullName evidence="8">Rhoptry discharge factor 1</fullName>
        <shortName evidence="8">RDF1</shortName>
    </alternativeName>
</protein>
<gene>
    <name evidence="10" type="primary">MIC15</name>
    <name evidence="11" type="ORF">TGRH88_061300</name>
</gene>
<evidence type="ECO:0000255" key="1"/>
<evidence type="ECO:0000255" key="2">
    <source>
        <dbReference type="PROSITE-ProRule" id="PRU00210"/>
    </source>
</evidence>
<evidence type="ECO:0000255" key="3">
    <source>
        <dbReference type="PROSITE-ProRule" id="PRU00498"/>
    </source>
</evidence>
<evidence type="ECO:0000256" key="4">
    <source>
        <dbReference type="SAM" id="MobiDB-lite"/>
    </source>
</evidence>
<evidence type="ECO:0000269" key="5">
    <source>
    </source>
</evidence>
<evidence type="ECO:0000269" key="6">
    <source>
    </source>
</evidence>
<evidence type="ECO:0000269" key="7">
    <source>
    </source>
</evidence>
<evidence type="ECO:0000303" key="8">
    <source>
    </source>
</evidence>
<evidence type="ECO:0000305" key="9"/>
<evidence type="ECO:0000312" key="10">
    <source>
        <dbReference type="EMBL" id="ABE73145.2"/>
    </source>
</evidence>
<evidence type="ECO:0000312" key="11">
    <source>
        <dbReference type="EMBL" id="KAF4638522.1"/>
    </source>
</evidence>
<evidence type="ECO:0000312" key="12">
    <source>
        <dbReference type="Proteomes" id="UP000557509"/>
    </source>
</evidence>
<keyword id="KW-1015">Disulfide bond</keyword>
<keyword id="KW-0268">Exocytosis</keyword>
<keyword id="KW-0325">Glycoprotein</keyword>
<keyword id="KW-0472">Membrane</keyword>
<keyword id="KW-1185">Reference proteome</keyword>
<keyword id="KW-0677">Repeat</keyword>
<keyword id="KW-0732">Signal</keyword>
<keyword id="KW-0812">Transmembrane</keyword>
<keyword id="KW-1133">Transmembrane helix</keyword>
<comment type="function">
    <text evidence="5 7">Required for rhoptry secretion (PubMed:35756016). Plays a role in host cell invasion (PubMed:35756016, PubMed:36602948).</text>
</comment>
<comment type="subunit">
    <text evidence="6 7">Component of a complex, at least composed of cysteine repeat modular protein A (CRMPa), cysteine repeat modular protein B (CRMPb), micronemal protein 15 (MIC15) and thrombospondin type 1 domain-containing protein (TSP1).</text>
</comment>
<comment type="subcellular location">
    <subcellularLocation>
        <location evidence="1">Membrane</location>
        <topology evidence="1">Single-pass membrane protein</topology>
    </subcellularLocation>
    <text evidence="5">In tachyzoites, shows dispersed intracellular localization.</text>
</comment>
<comment type="disruption phenotype">
    <text evidence="5">Attempts to generate a knockout failed (PubMed:35756016). Conditional knockdown results in defects in plaque formation due to impaired host cell invasion (PubMed:35756016). Impaired rhoptry discharge (PubMed:35756016). No significant effects on the apical positioning of the rhoptries (PubMed:35756016). No significant effects on tachyzoite division (PubMed:35756016). No significant effects on microneme discharge, parasite gliding motility and egress from the host cell (PubMed:35756016).</text>
</comment>
<reference evidence="10" key="1">
    <citation type="submission" date="2010-05" db="EMBL/GenBank/DDBJ databases">
        <title>Expanding the repertoire of thrombospondin-related microneme proteins of Toxoplasma gondii.</title>
        <authorList>
            <person name="Possenti A."/>
            <person name="Messina V."/>
            <person name="Cherchi S."/>
            <person name="Spano F."/>
        </authorList>
    </citation>
    <scope>NUCLEOTIDE SEQUENCE [MRNA]</scope>
    <source>
        <strain evidence="10">RH</strain>
    </source>
</reference>
<reference evidence="12" key="2">
    <citation type="submission" date="2020-03" db="EMBL/GenBank/DDBJ databases">
        <title>Genome sequence of Toxoplasma gondii RH-88 strain.</title>
        <authorList>
            <person name="Lorenzi H.A."/>
            <person name="Venepally P."/>
            <person name="Rozenberg A."/>
            <person name="Sibley D."/>
        </authorList>
    </citation>
    <scope>NUCLEOTIDE SEQUENCE [LARGE SCALE GENOMIC DNA]</scope>
    <source>
        <strain evidence="12">RH-88</strain>
    </source>
</reference>
<reference evidence="9" key="3">
    <citation type="journal article" date="2022" name="EMBO J.">
        <title>An apical membrane complex for triggering rhoptry exocytosis and invasion in Toxoplasma.</title>
        <authorList>
            <person name="Sparvoli D."/>
            <person name="Delabre J."/>
            <person name="Penarete-Vargas D.M."/>
            <person name="Kumar Mageswaran S."/>
            <person name="Tsypin L.M."/>
            <person name="Heckendorn J."/>
            <person name="Theveny L."/>
            <person name="Maynadier M."/>
            <person name="Mendonca Cova M."/>
            <person name="Berry-Sterkers L."/>
            <person name="Guerin A."/>
            <person name="Dubremetz J.F."/>
            <person name="Urbach S."/>
            <person name="Striepen B."/>
            <person name="Turkewitz A.P."/>
            <person name="Chang Y.W."/>
            <person name="Lebrun M."/>
        </authorList>
    </citation>
    <scope>INTERACTION WITH CYSTEINE REPEAT MODULAR PROTEIN A; CYSTEINE REPEAT MODULAR PROTEIN B AND THROMBOSPONDIN TYPE 1 DOMAIN-CONTAINING PROTEIN</scope>
</reference>
<reference evidence="9" key="4">
    <citation type="journal article" date="2022" name="Front. Microbiol.">
        <title>Functional Characterization of the Thrombospondin-Related Paralogous Proteins Rhoptry Discharge Factors 1 and 2 Unveils Phenotypic Plasticity in Toxoplasma gondii Rhoptry Exocytosis.</title>
        <authorList>
            <person name="Possenti A."/>
            <person name="Di Cristina M."/>
            <person name="Nicastro C."/>
            <person name="Lunghi M."/>
            <person name="Messina V."/>
            <person name="Piro F."/>
            <person name="Tramontana L."/>
            <person name="Cherchi S."/>
            <person name="Falchi M."/>
            <person name="Bertuccini L."/>
            <person name="Spano F."/>
        </authorList>
    </citation>
    <scope>FUNCTION</scope>
    <scope>SUBCELLULAR LOCATION</scope>
    <scope>DISRUPTION PHENOTYPE</scope>
</reference>
<reference evidence="9" key="5">
    <citation type="journal article" date="2023" name="PLoS Biol.">
        <title>A central CRMP complex essential for invasion in Toxoplasma gondii.</title>
        <authorList>
            <person name="Singer M."/>
            <person name="Simon K."/>
            <person name="Forne I."/>
            <person name="Meissner M."/>
        </authorList>
    </citation>
    <scope>FUNCTION</scope>
    <scope>CYSTEINE REPEAT MODULAR PROTEIN A; CYSTEINE REPEAT MODULAR PROTEIN B AND THROMBOSPONDIN TYPE 1 DOMAIN-CONTAINING PROTEIN</scope>
</reference>